<protein>
    <recommendedName>
        <fullName evidence="1">DNA-directed RNA polymerase subunit omega</fullName>
        <shortName evidence="1">RNAP omega subunit</shortName>
        <ecNumber evidence="1">2.7.7.6</ecNumber>
    </recommendedName>
    <alternativeName>
        <fullName evidence="1">RNA polymerase omega subunit</fullName>
    </alternativeName>
    <alternativeName>
        <fullName evidence="1">Transcriptase subunit omega</fullName>
    </alternativeName>
</protein>
<reference key="1">
    <citation type="journal article" date="2011" name="J. Bacteriol.">
        <title>Genome of Ochrobactrum anthropi ATCC 49188 T, a versatile opportunistic pathogen and symbiont of several eukaryotic hosts.</title>
        <authorList>
            <person name="Chain P.S."/>
            <person name="Lang D.M."/>
            <person name="Comerci D.J."/>
            <person name="Malfatti S.A."/>
            <person name="Vergez L.M."/>
            <person name="Shin M."/>
            <person name="Ugalde R.A."/>
            <person name="Garcia E."/>
            <person name="Tolmasky M.E."/>
        </authorList>
    </citation>
    <scope>NUCLEOTIDE SEQUENCE [LARGE SCALE GENOMIC DNA]</scope>
    <source>
        <strain>ATCC 49188 / DSM 6882 / CCUG 24695 / JCM 21032 / LMG 3331 / NBRC 15819 / NCTC 12168 / Alc 37</strain>
    </source>
</reference>
<feature type="chain" id="PRO_1000005968" description="DNA-directed RNA polymerase subunit omega">
    <location>
        <begin position="1"/>
        <end position="134"/>
    </location>
</feature>
<dbReference type="EC" id="2.7.7.6" evidence="1"/>
<dbReference type="EMBL" id="CP000758">
    <property type="protein sequence ID" value="ABS15350.1"/>
    <property type="molecule type" value="Genomic_DNA"/>
</dbReference>
<dbReference type="RefSeq" id="WP_012092418.1">
    <property type="nucleotide sequence ID" value="NC_009667.1"/>
</dbReference>
<dbReference type="SMR" id="A6X296"/>
<dbReference type="STRING" id="439375.Oant_2637"/>
<dbReference type="KEGG" id="oan:Oant_2637"/>
<dbReference type="PATRIC" id="fig|439375.7.peg.2779"/>
<dbReference type="eggNOG" id="COG1758">
    <property type="taxonomic scope" value="Bacteria"/>
</dbReference>
<dbReference type="HOGENOM" id="CLU_125406_2_0_5"/>
<dbReference type="PhylomeDB" id="A6X296"/>
<dbReference type="Proteomes" id="UP000002301">
    <property type="component" value="Chromosome 1"/>
</dbReference>
<dbReference type="GO" id="GO:0000428">
    <property type="term" value="C:DNA-directed RNA polymerase complex"/>
    <property type="evidence" value="ECO:0007669"/>
    <property type="project" value="UniProtKB-KW"/>
</dbReference>
<dbReference type="GO" id="GO:0003677">
    <property type="term" value="F:DNA binding"/>
    <property type="evidence" value="ECO:0007669"/>
    <property type="project" value="UniProtKB-UniRule"/>
</dbReference>
<dbReference type="GO" id="GO:0003899">
    <property type="term" value="F:DNA-directed RNA polymerase activity"/>
    <property type="evidence" value="ECO:0007669"/>
    <property type="project" value="UniProtKB-UniRule"/>
</dbReference>
<dbReference type="GO" id="GO:0006351">
    <property type="term" value="P:DNA-templated transcription"/>
    <property type="evidence" value="ECO:0007669"/>
    <property type="project" value="UniProtKB-UniRule"/>
</dbReference>
<dbReference type="Gene3D" id="3.90.940.10">
    <property type="match status" value="1"/>
</dbReference>
<dbReference type="HAMAP" id="MF_00366">
    <property type="entry name" value="RNApol_bact_RpoZ"/>
    <property type="match status" value="1"/>
</dbReference>
<dbReference type="InterPro" id="IPR003716">
    <property type="entry name" value="DNA-dir_RNA_pol_omega"/>
</dbReference>
<dbReference type="InterPro" id="IPR006110">
    <property type="entry name" value="Pol_omega/Rpo6/RPB6"/>
</dbReference>
<dbReference type="InterPro" id="IPR036161">
    <property type="entry name" value="RPB6/omega-like_sf"/>
</dbReference>
<dbReference type="NCBIfam" id="TIGR00690">
    <property type="entry name" value="rpoZ"/>
    <property type="match status" value="1"/>
</dbReference>
<dbReference type="PANTHER" id="PTHR34476">
    <property type="entry name" value="DNA-DIRECTED RNA POLYMERASE SUBUNIT OMEGA"/>
    <property type="match status" value="1"/>
</dbReference>
<dbReference type="PANTHER" id="PTHR34476:SF1">
    <property type="entry name" value="DNA-DIRECTED RNA POLYMERASE SUBUNIT OMEGA"/>
    <property type="match status" value="1"/>
</dbReference>
<dbReference type="Pfam" id="PF01192">
    <property type="entry name" value="RNA_pol_Rpb6"/>
    <property type="match status" value="1"/>
</dbReference>
<dbReference type="SMART" id="SM01409">
    <property type="entry name" value="RNA_pol_Rpb6"/>
    <property type="match status" value="1"/>
</dbReference>
<dbReference type="SUPFAM" id="SSF63562">
    <property type="entry name" value="RPB6/omega subunit-like"/>
    <property type="match status" value="1"/>
</dbReference>
<gene>
    <name evidence="1" type="primary">rpoZ</name>
    <name type="ordered locus">Oant_2637</name>
</gene>
<accession>A6X296</accession>
<organism>
    <name type="scientific">Brucella anthropi (strain ATCC 49188 / DSM 6882 / CCUG 24695 / JCM 21032 / LMG 3331 / NBRC 15819 / NCTC 12168 / Alc 37)</name>
    <name type="common">Ochrobactrum anthropi</name>
    <dbReference type="NCBI Taxonomy" id="439375"/>
    <lineage>
        <taxon>Bacteria</taxon>
        <taxon>Pseudomonadati</taxon>
        <taxon>Pseudomonadota</taxon>
        <taxon>Alphaproteobacteria</taxon>
        <taxon>Hyphomicrobiales</taxon>
        <taxon>Brucellaceae</taxon>
        <taxon>Brucella/Ochrobactrum group</taxon>
        <taxon>Brucella</taxon>
    </lineage>
</organism>
<name>RPOZ_BRUA4</name>
<sequence>MARVTVEDCVDKVENRFELVLLAGHRARQISQGAQITIDRDNDKNPVVALREIADETLSPDDLKEDLIHSLQKHVEVDEPEAAAPAQIASSSEEVAEGIADAAEEDMVAFDRMSEEELLAGIEGLVAPEKNDDF</sequence>
<keyword id="KW-0240">DNA-directed RNA polymerase</keyword>
<keyword id="KW-0548">Nucleotidyltransferase</keyword>
<keyword id="KW-1185">Reference proteome</keyword>
<keyword id="KW-0804">Transcription</keyword>
<keyword id="KW-0808">Transferase</keyword>
<evidence type="ECO:0000255" key="1">
    <source>
        <dbReference type="HAMAP-Rule" id="MF_00366"/>
    </source>
</evidence>
<proteinExistence type="inferred from homology"/>
<comment type="function">
    <text evidence="1">Promotes RNA polymerase assembly. Latches the N- and C-terminal regions of the beta' subunit thereby facilitating its interaction with the beta and alpha subunits.</text>
</comment>
<comment type="catalytic activity">
    <reaction evidence="1">
        <text>RNA(n) + a ribonucleoside 5'-triphosphate = RNA(n+1) + diphosphate</text>
        <dbReference type="Rhea" id="RHEA:21248"/>
        <dbReference type="Rhea" id="RHEA-COMP:14527"/>
        <dbReference type="Rhea" id="RHEA-COMP:17342"/>
        <dbReference type="ChEBI" id="CHEBI:33019"/>
        <dbReference type="ChEBI" id="CHEBI:61557"/>
        <dbReference type="ChEBI" id="CHEBI:140395"/>
        <dbReference type="EC" id="2.7.7.6"/>
    </reaction>
</comment>
<comment type="subunit">
    <text evidence="1">The RNAP catalytic core consists of 2 alpha, 1 beta, 1 beta' and 1 omega subunit. When a sigma factor is associated with the core the holoenzyme is formed, which can initiate transcription.</text>
</comment>
<comment type="similarity">
    <text evidence="1">Belongs to the RNA polymerase subunit omega family.</text>
</comment>